<protein>
    <recommendedName>
        <fullName>Guanylate cyclase 2G</fullName>
        <ecNumber evidence="4">4.6.1.2</ecNumber>
    </recommendedName>
    <alternativeName>
        <fullName>Guanylyl cyclase receptor G</fullName>
        <shortName evidence="5">mGC-G</shortName>
    </alternativeName>
</protein>
<accession>Q6TL19</accession>
<accession>Q8BWU7</accession>
<name>GUC2G_MOUSE</name>
<gene>
    <name type="primary">Gucy2g</name>
</gene>
<reference key="1">
    <citation type="journal article" date="2004" name="Biochem. J.">
        <title>Identification of an orphan guanylate cyclase receptor selectively expressed in mouse testis.</title>
        <authorList>
            <person name="Kuhn M."/>
            <person name="Ng C.K."/>
            <person name="Su Y.H."/>
            <person name="Kilic A."/>
            <person name="Mitko D."/>
            <person name="Bien-Ly N."/>
            <person name="Komuves L.G."/>
            <person name="Yang R.B."/>
        </authorList>
    </citation>
    <scope>NUCLEOTIDE SEQUENCE [MRNA]</scope>
    <scope>CATALYTIC ACTIVITY</scope>
    <scope>HOMOOLIGOMERIZATION</scope>
    <scope>INTERACTION WITH NPR1</scope>
    <scope>TISSUE SPECIFICITY</scope>
    <scope>GLYCOSYLATION</scope>
    <scope>SUBCELLULAR LOCATION</scope>
    <scope>MUTAGENESIS OF CYS-458 AND CYS-465</scope>
    <source>
        <strain>BALB/cJ</strain>
        <tissue>Testis</tissue>
    </source>
</reference>
<reference key="2">
    <citation type="journal article" date="2005" name="Science">
        <title>The transcriptional landscape of the mammalian genome.</title>
        <authorList>
            <person name="Carninci P."/>
            <person name="Kasukawa T."/>
            <person name="Katayama S."/>
            <person name="Gough J."/>
            <person name="Frith M.C."/>
            <person name="Maeda N."/>
            <person name="Oyama R."/>
            <person name="Ravasi T."/>
            <person name="Lenhard B."/>
            <person name="Wells C."/>
            <person name="Kodzius R."/>
            <person name="Shimokawa K."/>
            <person name="Bajic V.B."/>
            <person name="Brenner S.E."/>
            <person name="Batalov S."/>
            <person name="Forrest A.R."/>
            <person name="Zavolan M."/>
            <person name="Davis M.J."/>
            <person name="Wilming L.G."/>
            <person name="Aidinis V."/>
            <person name="Allen J.E."/>
            <person name="Ambesi-Impiombato A."/>
            <person name="Apweiler R."/>
            <person name="Aturaliya R.N."/>
            <person name="Bailey T.L."/>
            <person name="Bansal M."/>
            <person name="Baxter L."/>
            <person name="Beisel K.W."/>
            <person name="Bersano T."/>
            <person name="Bono H."/>
            <person name="Chalk A.M."/>
            <person name="Chiu K.P."/>
            <person name="Choudhary V."/>
            <person name="Christoffels A."/>
            <person name="Clutterbuck D.R."/>
            <person name="Crowe M.L."/>
            <person name="Dalla E."/>
            <person name="Dalrymple B.P."/>
            <person name="de Bono B."/>
            <person name="Della Gatta G."/>
            <person name="di Bernardo D."/>
            <person name="Down T."/>
            <person name="Engstrom P."/>
            <person name="Fagiolini M."/>
            <person name="Faulkner G."/>
            <person name="Fletcher C.F."/>
            <person name="Fukushima T."/>
            <person name="Furuno M."/>
            <person name="Futaki S."/>
            <person name="Gariboldi M."/>
            <person name="Georgii-Hemming P."/>
            <person name="Gingeras T.R."/>
            <person name="Gojobori T."/>
            <person name="Green R.E."/>
            <person name="Gustincich S."/>
            <person name="Harbers M."/>
            <person name="Hayashi Y."/>
            <person name="Hensch T.K."/>
            <person name="Hirokawa N."/>
            <person name="Hill D."/>
            <person name="Huminiecki L."/>
            <person name="Iacono M."/>
            <person name="Ikeo K."/>
            <person name="Iwama A."/>
            <person name="Ishikawa T."/>
            <person name="Jakt M."/>
            <person name="Kanapin A."/>
            <person name="Katoh M."/>
            <person name="Kawasawa Y."/>
            <person name="Kelso J."/>
            <person name="Kitamura H."/>
            <person name="Kitano H."/>
            <person name="Kollias G."/>
            <person name="Krishnan S.P."/>
            <person name="Kruger A."/>
            <person name="Kummerfeld S.K."/>
            <person name="Kurochkin I.V."/>
            <person name="Lareau L.F."/>
            <person name="Lazarevic D."/>
            <person name="Lipovich L."/>
            <person name="Liu J."/>
            <person name="Liuni S."/>
            <person name="McWilliam S."/>
            <person name="Madan Babu M."/>
            <person name="Madera M."/>
            <person name="Marchionni L."/>
            <person name="Matsuda H."/>
            <person name="Matsuzawa S."/>
            <person name="Miki H."/>
            <person name="Mignone F."/>
            <person name="Miyake S."/>
            <person name="Morris K."/>
            <person name="Mottagui-Tabar S."/>
            <person name="Mulder N."/>
            <person name="Nakano N."/>
            <person name="Nakauchi H."/>
            <person name="Ng P."/>
            <person name="Nilsson R."/>
            <person name="Nishiguchi S."/>
            <person name="Nishikawa S."/>
            <person name="Nori F."/>
            <person name="Ohara O."/>
            <person name="Okazaki Y."/>
            <person name="Orlando V."/>
            <person name="Pang K.C."/>
            <person name="Pavan W.J."/>
            <person name="Pavesi G."/>
            <person name="Pesole G."/>
            <person name="Petrovsky N."/>
            <person name="Piazza S."/>
            <person name="Reed J."/>
            <person name="Reid J.F."/>
            <person name="Ring B.Z."/>
            <person name="Ringwald M."/>
            <person name="Rost B."/>
            <person name="Ruan Y."/>
            <person name="Salzberg S.L."/>
            <person name="Sandelin A."/>
            <person name="Schneider C."/>
            <person name="Schoenbach C."/>
            <person name="Sekiguchi K."/>
            <person name="Semple C.A."/>
            <person name="Seno S."/>
            <person name="Sessa L."/>
            <person name="Sheng Y."/>
            <person name="Shibata Y."/>
            <person name="Shimada H."/>
            <person name="Shimada K."/>
            <person name="Silva D."/>
            <person name="Sinclair B."/>
            <person name="Sperling S."/>
            <person name="Stupka E."/>
            <person name="Sugiura K."/>
            <person name="Sultana R."/>
            <person name="Takenaka Y."/>
            <person name="Taki K."/>
            <person name="Tammoja K."/>
            <person name="Tan S.L."/>
            <person name="Tang S."/>
            <person name="Taylor M.S."/>
            <person name="Tegner J."/>
            <person name="Teichmann S.A."/>
            <person name="Ueda H.R."/>
            <person name="van Nimwegen E."/>
            <person name="Verardo R."/>
            <person name="Wei C.L."/>
            <person name="Yagi K."/>
            <person name="Yamanishi H."/>
            <person name="Zabarovsky E."/>
            <person name="Zhu S."/>
            <person name="Zimmer A."/>
            <person name="Hide W."/>
            <person name="Bult C."/>
            <person name="Grimmond S.M."/>
            <person name="Teasdale R.D."/>
            <person name="Liu E.T."/>
            <person name="Brusic V."/>
            <person name="Quackenbush J."/>
            <person name="Wahlestedt C."/>
            <person name="Mattick J.S."/>
            <person name="Hume D.A."/>
            <person name="Kai C."/>
            <person name="Sasaki D."/>
            <person name="Tomaru Y."/>
            <person name="Fukuda S."/>
            <person name="Kanamori-Katayama M."/>
            <person name="Suzuki M."/>
            <person name="Aoki J."/>
            <person name="Arakawa T."/>
            <person name="Iida J."/>
            <person name="Imamura K."/>
            <person name="Itoh M."/>
            <person name="Kato T."/>
            <person name="Kawaji H."/>
            <person name="Kawagashira N."/>
            <person name="Kawashima T."/>
            <person name="Kojima M."/>
            <person name="Kondo S."/>
            <person name="Konno H."/>
            <person name="Nakano K."/>
            <person name="Ninomiya N."/>
            <person name="Nishio T."/>
            <person name="Okada M."/>
            <person name="Plessy C."/>
            <person name="Shibata K."/>
            <person name="Shiraki T."/>
            <person name="Suzuki S."/>
            <person name="Tagami M."/>
            <person name="Waki K."/>
            <person name="Watahiki A."/>
            <person name="Okamura-Oho Y."/>
            <person name="Suzuki H."/>
            <person name="Kawai J."/>
            <person name="Hayashizaki Y."/>
        </authorList>
    </citation>
    <scope>NUCLEOTIDE SEQUENCE [LARGE SCALE MRNA] OF 662-1100</scope>
    <source>
        <strain>C57BL/6J</strain>
        <tissue>Hippocampus</tissue>
    </source>
</reference>
<evidence type="ECO:0000255" key="1"/>
<evidence type="ECO:0000255" key="2">
    <source>
        <dbReference type="PROSITE-ProRule" id="PRU00099"/>
    </source>
</evidence>
<evidence type="ECO:0000255" key="3">
    <source>
        <dbReference type="PROSITE-ProRule" id="PRU00159"/>
    </source>
</evidence>
<evidence type="ECO:0000269" key="4">
    <source>
    </source>
</evidence>
<evidence type="ECO:0000303" key="5">
    <source>
    </source>
</evidence>
<evidence type="ECO:0000305" key="6"/>
<evidence type="ECO:0000305" key="7">
    <source>
    </source>
</evidence>
<keyword id="KW-1003">Cell membrane</keyword>
<keyword id="KW-0141">cGMP biosynthesis</keyword>
<keyword id="KW-0325">Glycoprotein</keyword>
<keyword id="KW-0342">GTP-binding</keyword>
<keyword id="KW-0456">Lyase</keyword>
<keyword id="KW-0472">Membrane</keyword>
<keyword id="KW-0547">Nucleotide-binding</keyword>
<keyword id="KW-0675">Receptor</keyword>
<keyword id="KW-1185">Reference proteome</keyword>
<keyword id="KW-0732">Signal</keyword>
<keyword id="KW-0812">Transmembrane</keyword>
<keyword id="KW-1133">Transmembrane helix</keyword>
<dbReference type="EC" id="4.6.1.2" evidence="4"/>
<dbReference type="EMBL" id="AY395631">
    <property type="protein sequence ID" value="AAR28089.1"/>
    <property type="molecule type" value="mRNA"/>
</dbReference>
<dbReference type="EMBL" id="AK049940">
    <property type="protein sequence ID" value="BAC33995.1"/>
    <property type="molecule type" value="mRNA"/>
</dbReference>
<dbReference type="CCDS" id="CCDS38026.1"/>
<dbReference type="RefSeq" id="NP_001074545.1">
    <property type="nucleotide sequence ID" value="NM_001081076.3"/>
</dbReference>
<dbReference type="SMR" id="Q6TL19"/>
<dbReference type="BioGRID" id="216200">
    <property type="interactions" value="1"/>
</dbReference>
<dbReference type="FunCoup" id="Q6TL19">
    <property type="interactions" value="588"/>
</dbReference>
<dbReference type="STRING" id="10090.ENSMUSP00000068253"/>
<dbReference type="GlyCosmos" id="Q6TL19">
    <property type="glycosylation" value="9 sites, No reported glycans"/>
</dbReference>
<dbReference type="GlyGen" id="Q6TL19">
    <property type="glycosylation" value="9 sites"/>
</dbReference>
<dbReference type="iPTMnet" id="Q6TL19"/>
<dbReference type="PhosphoSitePlus" id="Q6TL19"/>
<dbReference type="PaxDb" id="10090-ENSMUSP00000068253"/>
<dbReference type="ProteomicsDB" id="269641"/>
<dbReference type="DNASU" id="73707"/>
<dbReference type="Ensembl" id="ENSMUST00000069183.8">
    <property type="protein sequence ID" value="ENSMUSP00000068253.7"/>
    <property type="gene ID" value="ENSMUSG00000055523.8"/>
</dbReference>
<dbReference type="GeneID" id="73707"/>
<dbReference type="KEGG" id="mmu:73707"/>
<dbReference type="UCSC" id="uc008hxo.2">
    <property type="organism name" value="mouse"/>
</dbReference>
<dbReference type="AGR" id="MGI:106025"/>
<dbReference type="CTD" id="73707"/>
<dbReference type="MGI" id="MGI:106025">
    <property type="gene designation" value="Gucy2g"/>
</dbReference>
<dbReference type="VEuPathDB" id="HostDB:ENSMUSG00000055523"/>
<dbReference type="eggNOG" id="KOG1023">
    <property type="taxonomic scope" value="Eukaryota"/>
</dbReference>
<dbReference type="GeneTree" id="ENSGT00940000163069"/>
<dbReference type="HOGENOM" id="CLU_001072_1_3_1"/>
<dbReference type="InParanoid" id="Q6TL19"/>
<dbReference type="OMA" id="LYQGNHV"/>
<dbReference type="OrthoDB" id="1890790at2759"/>
<dbReference type="PhylomeDB" id="Q6TL19"/>
<dbReference type="TreeFam" id="TF106338"/>
<dbReference type="BRENDA" id="4.6.1.2">
    <property type="organism ID" value="3474"/>
</dbReference>
<dbReference type="BioGRID-ORCS" id="73707">
    <property type="hits" value="0 hits in 76 CRISPR screens"/>
</dbReference>
<dbReference type="ChiTaRS" id="Gucy2g">
    <property type="organism name" value="mouse"/>
</dbReference>
<dbReference type="PRO" id="PR:Q6TL19"/>
<dbReference type="Proteomes" id="UP000000589">
    <property type="component" value="Chromosome 19"/>
</dbReference>
<dbReference type="RNAct" id="Q6TL19">
    <property type="molecule type" value="protein"/>
</dbReference>
<dbReference type="Bgee" id="ENSMUSG00000055523">
    <property type="expression patterns" value="Expressed in dentate gyrus of hippocampal formation granule cell and 24 other cell types or tissues"/>
</dbReference>
<dbReference type="GO" id="GO:0009897">
    <property type="term" value="C:external side of plasma membrane"/>
    <property type="evidence" value="ECO:0000314"/>
    <property type="project" value="MGI"/>
</dbReference>
<dbReference type="GO" id="GO:0016020">
    <property type="term" value="C:membrane"/>
    <property type="evidence" value="ECO:0000314"/>
    <property type="project" value="MGI"/>
</dbReference>
<dbReference type="GO" id="GO:0005524">
    <property type="term" value="F:ATP binding"/>
    <property type="evidence" value="ECO:0007669"/>
    <property type="project" value="InterPro"/>
</dbReference>
<dbReference type="GO" id="GO:0005525">
    <property type="term" value="F:GTP binding"/>
    <property type="evidence" value="ECO:0007669"/>
    <property type="project" value="UniProtKB-KW"/>
</dbReference>
<dbReference type="GO" id="GO:0004383">
    <property type="term" value="F:guanylate cyclase activity"/>
    <property type="evidence" value="ECO:0000314"/>
    <property type="project" value="MGI"/>
</dbReference>
<dbReference type="GO" id="GO:0004672">
    <property type="term" value="F:protein kinase activity"/>
    <property type="evidence" value="ECO:0007669"/>
    <property type="project" value="InterPro"/>
</dbReference>
<dbReference type="GO" id="GO:0035556">
    <property type="term" value="P:intracellular signal transduction"/>
    <property type="evidence" value="ECO:0007669"/>
    <property type="project" value="InterPro"/>
</dbReference>
<dbReference type="CDD" id="cd07302">
    <property type="entry name" value="CHD"/>
    <property type="match status" value="1"/>
</dbReference>
<dbReference type="CDD" id="cd06372">
    <property type="entry name" value="PBP1_GC_G-like"/>
    <property type="match status" value="1"/>
</dbReference>
<dbReference type="CDD" id="cd13992">
    <property type="entry name" value="PK_GC"/>
    <property type="match status" value="1"/>
</dbReference>
<dbReference type="FunFam" id="1.10.510.10:FF:001507">
    <property type="entry name" value="Guanylate cyclase"/>
    <property type="match status" value="1"/>
</dbReference>
<dbReference type="FunFam" id="3.30.70.1230:FF:000004">
    <property type="entry name" value="Guanylate cyclase"/>
    <property type="match status" value="1"/>
</dbReference>
<dbReference type="FunFam" id="3.40.50.2300:FF:000749">
    <property type="entry name" value="Guanylate cyclase 2G"/>
    <property type="match status" value="1"/>
</dbReference>
<dbReference type="Gene3D" id="3.40.50.2300">
    <property type="match status" value="2"/>
</dbReference>
<dbReference type="Gene3D" id="6.10.250.780">
    <property type="match status" value="1"/>
</dbReference>
<dbReference type="Gene3D" id="3.30.70.1230">
    <property type="entry name" value="Nucleotide cyclase"/>
    <property type="match status" value="1"/>
</dbReference>
<dbReference type="Gene3D" id="1.10.510.10">
    <property type="entry name" value="Transferase(Phosphotransferase) domain 1"/>
    <property type="match status" value="1"/>
</dbReference>
<dbReference type="InterPro" id="IPR001054">
    <property type="entry name" value="A/G_cyclase"/>
</dbReference>
<dbReference type="InterPro" id="IPR018297">
    <property type="entry name" value="A/G_cyclase_CS"/>
</dbReference>
<dbReference type="InterPro" id="IPR001828">
    <property type="entry name" value="ANF_lig-bd_rcpt"/>
</dbReference>
<dbReference type="InterPro" id="IPR001170">
    <property type="entry name" value="ANPR/GUC"/>
</dbReference>
<dbReference type="InterPro" id="IPR050401">
    <property type="entry name" value="Cyclic_nucleotide_synthase"/>
</dbReference>
<dbReference type="InterPro" id="IPR011009">
    <property type="entry name" value="Kinase-like_dom_sf"/>
</dbReference>
<dbReference type="InterPro" id="IPR029787">
    <property type="entry name" value="Nucleotide_cyclase"/>
</dbReference>
<dbReference type="InterPro" id="IPR028082">
    <property type="entry name" value="Peripla_BP_I"/>
</dbReference>
<dbReference type="InterPro" id="IPR000719">
    <property type="entry name" value="Prot_kinase_dom"/>
</dbReference>
<dbReference type="InterPro" id="IPR001245">
    <property type="entry name" value="Ser-Thr/Tyr_kinase_cat_dom"/>
</dbReference>
<dbReference type="PANTHER" id="PTHR11920:SF500">
    <property type="entry name" value="GUANYLATE CYCLASE 2G"/>
    <property type="match status" value="1"/>
</dbReference>
<dbReference type="PANTHER" id="PTHR11920">
    <property type="entry name" value="GUANYLYL CYCLASE"/>
    <property type="match status" value="1"/>
</dbReference>
<dbReference type="Pfam" id="PF01094">
    <property type="entry name" value="ANF_receptor"/>
    <property type="match status" value="1"/>
</dbReference>
<dbReference type="Pfam" id="PF00211">
    <property type="entry name" value="Guanylate_cyc"/>
    <property type="match status" value="1"/>
</dbReference>
<dbReference type="Pfam" id="PF07714">
    <property type="entry name" value="PK_Tyr_Ser-Thr"/>
    <property type="match status" value="1"/>
</dbReference>
<dbReference type="PRINTS" id="PR00255">
    <property type="entry name" value="NATPEPTIDER"/>
</dbReference>
<dbReference type="SMART" id="SM00044">
    <property type="entry name" value="CYCc"/>
    <property type="match status" value="1"/>
</dbReference>
<dbReference type="SUPFAM" id="SSF55073">
    <property type="entry name" value="Nucleotide cyclase"/>
    <property type="match status" value="1"/>
</dbReference>
<dbReference type="SUPFAM" id="SSF53822">
    <property type="entry name" value="Periplasmic binding protein-like I"/>
    <property type="match status" value="1"/>
</dbReference>
<dbReference type="SUPFAM" id="SSF56112">
    <property type="entry name" value="Protein kinase-like (PK-like)"/>
    <property type="match status" value="1"/>
</dbReference>
<dbReference type="PROSITE" id="PS00452">
    <property type="entry name" value="GUANYLATE_CYCLASE_1"/>
    <property type="match status" value="1"/>
</dbReference>
<dbReference type="PROSITE" id="PS50125">
    <property type="entry name" value="GUANYLATE_CYCLASE_2"/>
    <property type="match status" value="1"/>
</dbReference>
<dbReference type="PROSITE" id="PS50011">
    <property type="entry name" value="PROTEIN_KINASE_DOM"/>
    <property type="match status" value="1"/>
</dbReference>
<proteinExistence type="evidence at protein level"/>
<feature type="signal peptide" evidence="1">
    <location>
        <begin position="1"/>
        <end position="43"/>
    </location>
</feature>
<feature type="chain" id="PRO_0000042178" description="Guanylate cyclase 2G">
    <location>
        <begin position="44"/>
        <end position="1100"/>
    </location>
</feature>
<feature type="topological domain" description="Extracellular" evidence="1">
    <location>
        <begin position="44"/>
        <end position="481"/>
    </location>
</feature>
<feature type="transmembrane region" description="Helical" evidence="1">
    <location>
        <begin position="482"/>
        <end position="502"/>
    </location>
</feature>
<feature type="topological domain" description="Cytoplasmic" evidence="1">
    <location>
        <begin position="503"/>
        <end position="1100"/>
    </location>
</feature>
<feature type="domain" description="Protein kinase" evidence="3">
    <location>
        <begin position="546"/>
        <end position="837"/>
    </location>
</feature>
<feature type="domain" description="Guanylate cyclase" evidence="2">
    <location>
        <begin position="901"/>
        <end position="1031"/>
    </location>
</feature>
<feature type="glycosylation site" description="N-linked (GlcNAc...) asparagine" evidence="1">
    <location>
        <position position="55"/>
    </location>
</feature>
<feature type="glycosylation site" description="N-linked (GlcNAc...) asparagine" evidence="1">
    <location>
        <position position="85"/>
    </location>
</feature>
<feature type="glycosylation site" description="N-linked (GlcNAc...) asparagine" evidence="1">
    <location>
        <position position="94"/>
    </location>
</feature>
<feature type="glycosylation site" description="N-linked (GlcNAc...) asparagine" evidence="1">
    <location>
        <position position="217"/>
    </location>
</feature>
<feature type="glycosylation site" description="N-linked (GlcNAc...) asparagine" evidence="1">
    <location>
        <position position="225"/>
    </location>
</feature>
<feature type="glycosylation site" description="N-linked (GlcNAc...) asparagine" evidence="1">
    <location>
        <position position="238"/>
    </location>
</feature>
<feature type="glycosylation site" description="N-linked (GlcNAc...) asparagine" evidence="1">
    <location>
        <position position="418"/>
    </location>
</feature>
<feature type="glycosylation site" description="N-linked (GlcNAc...) asparagine" evidence="1">
    <location>
        <position position="440"/>
    </location>
</feature>
<feature type="glycosylation site" description="N-linked (GlcNAc...) asparagine" evidence="1">
    <location>
        <position position="443"/>
    </location>
</feature>
<feature type="mutagenesis site" description="Does not affect guanylate cyclase activity; when associated with S-465." evidence="4">
    <original>C</original>
    <variation>S</variation>
    <location>
        <position position="458"/>
    </location>
</feature>
<feature type="mutagenesis site" description="Does not affect guanylate cyclase activity; when associated with S-458." evidence="4">
    <original>C</original>
    <variation>S</variation>
    <location>
        <position position="465"/>
    </location>
</feature>
<feature type="sequence conflict" description="In Ref. 2." evidence="6" ref="2">
    <original>DIVN</original>
    <variation>LLLQ</variation>
    <location>
        <begin position="662"/>
        <end position="665"/>
    </location>
</feature>
<organism>
    <name type="scientific">Mus musculus</name>
    <name type="common">Mouse</name>
    <dbReference type="NCBI Taxonomy" id="10090"/>
    <lineage>
        <taxon>Eukaryota</taxon>
        <taxon>Metazoa</taxon>
        <taxon>Chordata</taxon>
        <taxon>Craniata</taxon>
        <taxon>Vertebrata</taxon>
        <taxon>Euteleostomi</taxon>
        <taxon>Mammalia</taxon>
        <taxon>Eutheria</taxon>
        <taxon>Euarchontoglires</taxon>
        <taxon>Glires</taxon>
        <taxon>Rodentia</taxon>
        <taxon>Myomorpha</taxon>
        <taxon>Muroidea</taxon>
        <taxon>Muridae</taxon>
        <taxon>Murinae</taxon>
        <taxon>Mus</taxon>
        <taxon>Mus</taxon>
    </lineage>
</organism>
<comment type="catalytic activity">
    <reaction evidence="4">
        <text>GTP = 3',5'-cyclic GMP + diphosphate</text>
        <dbReference type="Rhea" id="RHEA:13665"/>
        <dbReference type="ChEBI" id="CHEBI:33019"/>
        <dbReference type="ChEBI" id="CHEBI:37565"/>
        <dbReference type="ChEBI" id="CHEBI:57746"/>
        <dbReference type="EC" id="4.6.1.2"/>
    </reaction>
    <physiologicalReaction direction="left-to-right" evidence="4">
        <dbReference type="Rhea" id="RHEA:13666"/>
    </physiologicalReaction>
</comment>
<comment type="subunit">
    <text evidence="4">Homooligomer. In vitro interacts with NPR1/GC-A.</text>
</comment>
<comment type="subcellular location">
    <subcellularLocation>
        <location evidence="7">Cell membrane</location>
        <topology evidence="6">Single-pass type I membrane protein</topology>
    </subcellularLocation>
</comment>
<comment type="tissue specificity">
    <text evidence="4">Highly expressed in testis.</text>
</comment>
<comment type="PTM">
    <text evidence="4">N-glycosylated.</text>
</comment>
<comment type="similarity">
    <text evidence="2">Belongs to the adenylyl cyclase class-4/guanylyl cyclase family.</text>
</comment>
<sequence length="1100" mass="122546">MASRTRSESPLEPRLYAGAGSRADHPSLVLMLSVVMLVTCLEAAKLTVGFHAPWNISHPFSVQRLGAGLQTVVDKLNSEPVGLGNVSWEFTYTNSTCSAKESLAVFIDQVQKEHISALFGPACPEAAEVIGLLASEWNIPLFDFVGQMAALKDHFWCDTCVTLVPPKQEISAVLRESLRYLGWEHIGVFGGSSADSSWEQVDEMWGAVEDGLQFHFNITASMRYNSSSSDLLQEGLRNMSYVARVIILICSSEDARRILQAAVDLGLDTGEFVFILLQQLEDSFWKEVLTKDKVIRFPKVYESVFLIAPSAYGGGIGDDGFRKQVSQELRRPPFQSSITSEDQVSPYSAYLHDALLLYAQTVEEMRKAEKDFRDGRQLISTLRAGQVTLQGITGPVLLDSQGKRHVDYSVYALQESGNRSLFLPFLHYDSFQKVIRPWRNDSNTSWPHGSLPEYKPGCGFHNDLCKTKPPTVAGMTVTVTAVIPTVTFLVLASAAAITGLMLWRLRGKVQSHPGDTWWQIRYDSITLLPQHKLSHRGTPVSRRNVSDTSTVKASADCGSLVKRHQDEELFFAPVGLYQGNQVALCYIGDEAEAWVKKPTVRREVCLMCELKHENIVPFFGVCTEPPNICIVTQYCKKGSLQDVMRNSDHEIDWIFKLSFAYDIVNGLLFLHGSPLRSHGNLKPSNCLVDSHMQLKLSGFGLWEFKHGSTWRSYNQEATDHSELYWTAPELLRLRESPCSGTPQGDVYSFAILLRDLIHQQAHGPFEDLEAAPEEIISRIKDPRAPVPLRPSLLEDKGDGRIVALVRECWDESPELRPIFPSIKKTLREASPRGHVSILDSMMGKLETYANHLEEVVEERTRELVAEKRKVEKLLSTMLPSFVGEQLIAGKSVEPEHFESVTIFFSDIVGFTKLCSLSSPLQVVKLLNDLYSLFDHTIQSHDVYKVETIGDAYMVASGLPIRNGAQHADEIATMALHLLSVTTHFQIGHMPEERLKLRIGLHTGPVVAGVVGITMPRYCLFGDTVNMASRMESSSLPLRIHVSQSTAGALLAAGGYHLQKRGTISVKGKGEQTTFWLKGKDGFPVPLPEFTEEEAKVSEIL</sequence>